<name>FYV10_COCIM</name>
<gene>
    <name type="primary">FYV10</name>
    <name type="ORF">CIMG_06377</name>
</gene>
<feature type="chain" id="PRO_0000292457" description="Protein FYV10">
    <location>
        <begin position="1"/>
        <end position="402"/>
    </location>
</feature>
<feature type="domain" description="LisH" evidence="3">
    <location>
        <begin position="126"/>
        <end position="158"/>
    </location>
</feature>
<feature type="domain" description="CTLH" evidence="2">
    <location>
        <begin position="164"/>
        <end position="221"/>
    </location>
</feature>
<feature type="zinc finger region" description="RING-Gid-type" evidence="4">
    <location>
        <begin position="326"/>
        <end position="387"/>
    </location>
</feature>
<accession>Q1DTI6</accession>
<accession>J3K8K5</accession>
<comment type="function">
    <text evidence="1">Involved in the proteasome-dependent degradation of fructose-1,6-bisphosphatase.</text>
</comment>
<comment type="subcellular location">
    <subcellularLocation>
        <location evidence="1">Cytoplasm</location>
    </subcellularLocation>
    <subcellularLocation>
        <location evidence="1">Nucleus</location>
    </subcellularLocation>
</comment>
<comment type="similarity">
    <text evidence="5">Belongs to the FYV10 family.</text>
</comment>
<proteinExistence type="inferred from homology"/>
<dbReference type="EMBL" id="GG704912">
    <property type="protein sequence ID" value="EAS30898.3"/>
    <property type="molecule type" value="Genomic_DNA"/>
</dbReference>
<dbReference type="RefSeq" id="XP_001242481.1">
    <property type="nucleotide sequence ID" value="XM_001242480.2"/>
</dbReference>
<dbReference type="SMR" id="Q1DTI6"/>
<dbReference type="FunCoup" id="Q1DTI6">
    <property type="interactions" value="896"/>
</dbReference>
<dbReference type="STRING" id="246410.Q1DTI6"/>
<dbReference type="GeneID" id="4562443"/>
<dbReference type="KEGG" id="cim:CIMG_06377"/>
<dbReference type="VEuPathDB" id="FungiDB:CIMG_06377"/>
<dbReference type="InParanoid" id="Q1DTI6"/>
<dbReference type="OMA" id="ANHETAR"/>
<dbReference type="OrthoDB" id="1933455at2759"/>
<dbReference type="Proteomes" id="UP000001261">
    <property type="component" value="Unassembled WGS sequence"/>
</dbReference>
<dbReference type="GO" id="GO:0005737">
    <property type="term" value="C:cytoplasm"/>
    <property type="evidence" value="ECO:0007669"/>
    <property type="project" value="UniProtKB-SubCell"/>
</dbReference>
<dbReference type="GO" id="GO:0034657">
    <property type="term" value="C:GID complex"/>
    <property type="evidence" value="ECO:0007669"/>
    <property type="project" value="TreeGrafter"/>
</dbReference>
<dbReference type="GO" id="GO:0005634">
    <property type="term" value="C:nucleus"/>
    <property type="evidence" value="ECO:0007669"/>
    <property type="project" value="UniProtKB-SubCell"/>
</dbReference>
<dbReference type="GO" id="GO:0061630">
    <property type="term" value="F:ubiquitin protein ligase activity"/>
    <property type="evidence" value="ECO:0007669"/>
    <property type="project" value="InterPro"/>
</dbReference>
<dbReference type="GO" id="GO:0008270">
    <property type="term" value="F:zinc ion binding"/>
    <property type="evidence" value="ECO:0007669"/>
    <property type="project" value="UniProtKB-KW"/>
</dbReference>
<dbReference type="GO" id="GO:0045721">
    <property type="term" value="P:negative regulation of gluconeogenesis"/>
    <property type="evidence" value="ECO:0007669"/>
    <property type="project" value="UniProtKB-ARBA"/>
</dbReference>
<dbReference type="GO" id="GO:0043161">
    <property type="term" value="P:proteasome-mediated ubiquitin-dependent protein catabolic process"/>
    <property type="evidence" value="ECO:0007669"/>
    <property type="project" value="InterPro"/>
</dbReference>
<dbReference type="InterPro" id="IPR013144">
    <property type="entry name" value="CRA_dom"/>
</dbReference>
<dbReference type="InterPro" id="IPR024964">
    <property type="entry name" value="CTLH/CRA"/>
</dbReference>
<dbReference type="InterPro" id="IPR006595">
    <property type="entry name" value="CTLH_C"/>
</dbReference>
<dbReference type="InterPro" id="IPR045098">
    <property type="entry name" value="Fyv10_fam"/>
</dbReference>
<dbReference type="InterPro" id="IPR006594">
    <property type="entry name" value="LisH"/>
</dbReference>
<dbReference type="InterPro" id="IPR044063">
    <property type="entry name" value="ZF_RING_GID"/>
</dbReference>
<dbReference type="PANTHER" id="PTHR12170:SF2">
    <property type="entry name" value="E3 UBIQUITIN-PROTEIN TRANSFERASE MAEA"/>
    <property type="match status" value="1"/>
</dbReference>
<dbReference type="PANTHER" id="PTHR12170">
    <property type="entry name" value="MACROPHAGE ERYTHROBLAST ATTACHER-RELATED"/>
    <property type="match status" value="1"/>
</dbReference>
<dbReference type="Pfam" id="PF10607">
    <property type="entry name" value="CTLH"/>
    <property type="match status" value="1"/>
</dbReference>
<dbReference type="SMART" id="SM00757">
    <property type="entry name" value="CRA"/>
    <property type="match status" value="1"/>
</dbReference>
<dbReference type="SMART" id="SM00668">
    <property type="entry name" value="CTLH"/>
    <property type="match status" value="1"/>
</dbReference>
<dbReference type="PROSITE" id="PS50897">
    <property type="entry name" value="CTLH"/>
    <property type="match status" value="1"/>
</dbReference>
<dbReference type="PROSITE" id="PS50896">
    <property type="entry name" value="LISH"/>
    <property type="match status" value="1"/>
</dbReference>
<dbReference type="PROSITE" id="PS51867">
    <property type="entry name" value="ZF_RING_GID"/>
    <property type="match status" value="1"/>
</dbReference>
<keyword id="KW-0963">Cytoplasm</keyword>
<keyword id="KW-0479">Metal-binding</keyword>
<keyword id="KW-0539">Nucleus</keyword>
<keyword id="KW-1185">Reference proteome</keyword>
<keyword id="KW-0862">Zinc</keyword>
<keyword id="KW-0863">Zinc-finger</keyword>
<evidence type="ECO:0000250" key="1"/>
<evidence type="ECO:0000255" key="2">
    <source>
        <dbReference type="PROSITE-ProRule" id="PRU00058"/>
    </source>
</evidence>
<evidence type="ECO:0000255" key="3">
    <source>
        <dbReference type="PROSITE-ProRule" id="PRU00126"/>
    </source>
</evidence>
<evidence type="ECO:0000255" key="4">
    <source>
        <dbReference type="PROSITE-ProRule" id="PRU01215"/>
    </source>
</evidence>
<evidence type="ECO:0000305" key="5"/>
<protein>
    <recommendedName>
        <fullName>Protein FYV10</fullName>
    </recommendedName>
</protein>
<organism>
    <name type="scientific">Coccidioides immitis (strain RS)</name>
    <name type="common">Valley fever fungus</name>
    <dbReference type="NCBI Taxonomy" id="246410"/>
    <lineage>
        <taxon>Eukaryota</taxon>
        <taxon>Fungi</taxon>
        <taxon>Dikarya</taxon>
        <taxon>Ascomycota</taxon>
        <taxon>Pezizomycotina</taxon>
        <taxon>Eurotiomycetes</taxon>
        <taxon>Eurotiomycetidae</taxon>
        <taxon>Onygenales</taxon>
        <taxon>Onygenaceae</taxon>
        <taxon>Coccidioides</taxon>
    </lineage>
</organism>
<sequence>MAVELTSIKLNPENHLLLDQPLLRVPHELARRNFKSVQRIVEREKDYVLPALKETANASLSGSKNPTETIEALDAMITRMQGLKRKMEVLHEEEKKIATQSQKRIQYIQDLYKIPSLADVKYEQWSRTRLNRLLADHMLRSGYLESAKQLAEDKGIADLVDLSVFAQCQRIAHSLRRGETKEALQWCGENKVALKKIQNRLEFELRLQQYIEVLRVGDKAEARQHAKKFLTPHSETQSHDIQRAAGLLAYPPDTRAEPYMSMYSLERWKHLSDLFIRTHHDLLSLSSRPLLQIALSAGLSALKTPSCHSAIASSRASPLSLSTSICPICSTELNELARHVPYAHHTKSSVENDPVVLPNRRVYGMDRLSDMSKKAGVPEGKVKDPITGEIFDVSEVKKVYIS</sequence>
<reference key="1">
    <citation type="journal article" date="2009" name="Genome Res.">
        <title>Comparative genomic analyses of the human fungal pathogens Coccidioides and their relatives.</title>
        <authorList>
            <person name="Sharpton T.J."/>
            <person name="Stajich J.E."/>
            <person name="Rounsley S.D."/>
            <person name="Gardner M.J."/>
            <person name="Wortman J.R."/>
            <person name="Jordar V.S."/>
            <person name="Maiti R."/>
            <person name="Kodira C.D."/>
            <person name="Neafsey D.E."/>
            <person name="Zeng Q."/>
            <person name="Hung C.-Y."/>
            <person name="McMahan C."/>
            <person name="Muszewska A."/>
            <person name="Grynberg M."/>
            <person name="Mandel M.A."/>
            <person name="Kellner E.M."/>
            <person name="Barker B.M."/>
            <person name="Galgiani J.N."/>
            <person name="Orbach M.J."/>
            <person name="Kirkland T.N."/>
            <person name="Cole G.T."/>
            <person name="Henn M.R."/>
            <person name="Birren B.W."/>
            <person name="Taylor J.W."/>
        </authorList>
    </citation>
    <scope>NUCLEOTIDE SEQUENCE [LARGE SCALE GENOMIC DNA]</scope>
    <source>
        <strain>RS</strain>
    </source>
</reference>
<reference key="2">
    <citation type="journal article" date="2010" name="Genome Res.">
        <title>Population genomic sequencing of Coccidioides fungi reveals recent hybridization and transposon control.</title>
        <authorList>
            <person name="Neafsey D.E."/>
            <person name="Barker B.M."/>
            <person name="Sharpton T.J."/>
            <person name="Stajich J.E."/>
            <person name="Park D.J."/>
            <person name="Whiston E."/>
            <person name="Hung C.-Y."/>
            <person name="McMahan C."/>
            <person name="White J."/>
            <person name="Sykes S."/>
            <person name="Heiman D."/>
            <person name="Young S."/>
            <person name="Zeng Q."/>
            <person name="Abouelleil A."/>
            <person name="Aftuck L."/>
            <person name="Bessette D."/>
            <person name="Brown A."/>
            <person name="FitzGerald M."/>
            <person name="Lui A."/>
            <person name="Macdonald J.P."/>
            <person name="Priest M."/>
            <person name="Orbach M.J."/>
            <person name="Galgiani J.N."/>
            <person name="Kirkland T.N."/>
            <person name="Cole G.T."/>
            <person name="Birren B.W."/>
            <person name="Henn M.R."/>
            <person name="Taylor J.W."/>
            <person name="Rounsley S.D."/>
        </authorList>
    </citation>
    <scope>GENOME REANNOTATION</scope>
    <source>
        <strain>RS</strain>
    </source>
</reference>